<proteinExistence type="inferred from homology"/>
<comment type="function">
    <text evidence="1">Necessary for the introduction of cis unsaturation into fatty acids. Catalyzes the dehydration of (3R)-3-hydroxydecanoyl-ACP to E-(2)-decenoyl-ACP and then its isomerization to Z-(3)-decenoyl-ACP. Can catalyze the dehydratase reaction for beta-hydroxyacyl-ACPs with saturated chain lengths up to 16:0, being most active on intermediate chain length.</text>
</comment>
<comment type="catalytic activity">
    <reaction evidence="1">
        <text>a (3R)-hydroxyacyl-[ACP] = a (2E)-enoyl-[ACP] + H2O</text>
        <dbReference type="Rhea" id="RHEA:13097"/>
        <dbReference type="Rhea" id="RHEA-COMP:9925"/>
        <dbReference type="Rhea" id="RHEA-COMP:9945"/>
        <dbReference type="ChEBI" id="CHEBI:15377"/>
        <dbReference type="ChEBI" id="CHEBI:78784"/>
        <dbReference type="ChEBI" id="CHEBI:78827"/>
        <dbReference type="EC" id="4.2.1.59"/>
    </reaction>
</comment>
<comment type="catalytic activity">
    <reaction evidence="1">
        <text>(3R)-hydroxydecanoyl-[ACP] = (2E)-decenoyl-[ACP] + H2O</text>
        <dbReference type="Rhea" id="RHEA:41860"/>
        <dbReference type="Rhea" id="RHEA-COMP:9638"/>
        <dbReference type="Rhea" id="RHEA-COMP:9639"/>
        <dbReference type="ChEBI" id="CHEBI:15377"/>
        <dbReference type="ChEBI" id="CHEBI:78466"/>
        <dbReference type="ChEBI" id="CHEBI:78467"/>
    </reaction>
</comment>
<comment type="catalytic activity">
    <reaction evidence="1">
        <text>(2E)-decenoyl-[ACP] = (3Z)-decenoyl-[ACP]</text>
        <dbReference type="Rhea" id="RHEA:23568"/>
        <dbReference type="Rhea" id="RHEA-COMP:9639"/>
        <dbReference type="Rhea" id="RHEA-COMP:9927"/>
        <dbReference type="ChEBI" id="CHEBI:78467"/>
        <dbReference type="ChEBI" id="CHEBI:78798"/>
        <dbReference type="EC" id="5.3.3.14"/>
    </reaction>
</comment>
<comment type="pathway">
    <text evidence="1">Lipid metabolism; fatty acid biosynthesis.</text>
</comment>
<comment type="subunit">
    <text evidence="1">Homodimer.</text>
</comment>
<comment type="subcellular location">
    <subcellularLocation>
        <location evidence="1">Cytoplasm</location>
    </subcellularLocation>
</comment>
<comment type="similarity">
    <text evidence="1">Belongs to the thioester dehydratase family. FabA subfamily.</text>
</comment>
<organism>
    <name type="scientific">Klebsiella pneumoniae (strain 342)</name>
    <dbReference type="NCBI Taxonomy" id="507522"/>
    <lineage>
        <taxon>Bacteria</taxon>
        <taxon>Pseudomonadati</taxon>
        <taxon>Pseudomonadota</taxon>
        <taxon>Gammaproteobacteria</taxon>
        <taxon>Enterobacterales</taxon>
        <taxon>Enterobacteriaceae</taxon>
        <taxon>Klebsiella/Raoultella group</taxon>
        <taxon>Klebsiella</taxon>
        <taxon>Klebsiella pneumoniae complex</taxon>
    </lineage>
</organism>
<reference key="1">
    <citation type="journal article" date="2008" name="PLoS Genet.">
        <title>Complete genome sequence of the N2-fixing broad host range endophyte Klebsiella pneumoniae 342 and virulence predictions verified in mice.</title>
        <authorList>
            <person name="Fouts D.E."/>
            <person name="Tyler H.L."/>
            <person name="DeBoy R.T."/>
            <person name="Daugherty S."/>
            <person name="Ren Q."/>
            <person name="Badger J.H."/>
            <person name="Durkin A.S."/>
            <person name="Huot H."/>
            <person name="Shrivastava S."/>
            <person name="Kothari S."/>
            <person name="Dodson R.J."/>
            <person name="Mohamoud Y."/>
            <person name="Khouri H."/>
            <person name="Roesch L.F.W."/>
            <person name="Krogfelt K.A."/>
            <person name="Struve C."/>
            <person name="Triplett E.W."/>
            <person name="Methe B.A."/>
        </authorList>
    </citation>
    <scope>NUCLEOTIDE SEQUENCE [LARGE SCALE GENOMIC DNA]</scope>
    <source>
        <strain>342</strain>
    </source>
</reference>
<evidence type="ECO:0000255" key="1">
    <source>
        <dbReference type="HAMAP-Rule" id="MF_00405"/>
    </source>
</evidence>
<name>FABA_KLEP3</name>
<sequence>MVDKRESYTKEDLLASGRGELFGAKGPQLPAPNMLMMDRVIKMSETGGNYDKGYVEAELDINPDLWFFGCHFIGDPVMPGCLGLDAMWQLVGFYLGWLGGEGKGRALGVGEVKFTGQVLPTAKKVTYRIHFKRIVNRRLIMGLADGEVLVDDRLIYTANDLKVGLFQDTSAF</sequence>
<keyword id="KW-0963">Cytoplasm</keyword>
<keyword id="KW-0275">Fatty acid biosynthesis</keyword>
<keyword id="KW-0276">Fatty acid metabolism</keyword>
<keyword id="KW-0413">Isomerase</keyword>
<keyword id="KW-0444">Lipid biosynthesis</keyword>
<keyword id="KW-0443">Lipid metabolism</keyword>
<keyword id="KW-0456">Lyase</keyword>
<feature type="chain" id="PRO_1000201191" description="3-hydroxydecanoyl-[acyl-carrier-protein] dehydratase">
    <location>
        <begin position="1"/>
        <end position="172"/>
    </location>
</feature>
<feature type="active site" evidence="1">
    <location>
        <position position="71"/>
    </location>
</feature>
<accession>B5XY51</accession>
<dbReference type="EC" id="4.2.1.59" evidence="1"/>
<dbReference type="EC" id="5.3.3.14" evidence="1"/>
<dbReference type="EMBL" id="CP000964">
    <property type="protein sequence ID" value="ACI11949.1"/>
    <property type="molecule type" value="Genomic_DNA"/>
</dbReference>
<dbReference type="SMR" id="B5XY51"/>
<dbReference type="KEGG" id="kpe:KPK_3586"/>
<dbReference type="HOGENOM" id="CLU_097925_0_0_6"/>
<dbReference type="UniPathway" id="UPA00094"/>
<dbReference type="Proteomes" id="UP000001734">
    <property type="component" value="Chromosome"/>
</dbReference>
<dbReference type="GO" id="GO:0005737">
    <property type="term" value="C:cytoplasm"/>
    <property type="evidence" value="ECO:0007669"/>
    <property type="project" value="UniProtKB-SubCell"/>
</dbReference>
<dbReference type="GO" id="GO:0019171">
    <property type="term" value="F:(3R)-hydroxyacyl-[acyl-carrier-protein] dehydratase activity"/>
    <property type="evidence" value="ECO:0007669"/>
    <property type="project" value="UniProtKB-UniRule"/>
</dbReference>
<dbReference type="GO" id="GO:0034017">
    <property type="term" value="F:trans-2-decenoyl-acyl-carrier-protein isomerase activity"/>
    <property type="evidence" value="ECO:0007669"/>
    <property type="project" value="UniProtKB-UniRule"/>
</dbReference>
<dbReference type="GO" id="GO:0006636">
    <property type="term" value="P:unsaturated fatty acid biosynthetic process"/>
    <property type="evidence" value="ECO:0007669"/>
    <property type="project" value="UniProtKB-UniRule"/>
</dbReference>
<dbReference type="CDD" id="cd01287">
    <property type="entry name" value="FabA"/>
    <property type="match status" value="1"/>
</dbReference>
<dbReference type="FunFam" id="3.10.129.10:FF:000003">
    <property type="entry name" value="3-hydroxydecanoyl-[acyl-carrier-protein] dehydratase"/>
    <property type="match status" value="1"/>
</dbReference>
<dbReference type="Gene3D" id="3.10.129.10">
    <property type="entry name" value="Hotdog Thioesterase"/>
    <property type="match status" value="1"/>
</dbReference>
<dbReference type="HAMAP" id="MF_00405">
    <property type="entry name" value="FabA"/>
    <property type="match status" value="1"/>
</dbReference>
<dbReference type="InterPro" id="IPR010083">
    <property type="entry name" value="FabA"/>
</dbReference>
<dbReference type="InterPro" id="IPR013114">
    <property type="entry name" value="FabA_FabZ"/>
</dbReference>
<dbReference type="InterPro" id="IPR029069">
    <property type="entry name" value="HotDog_dom_sf"/>
</dbReference>
<dbReference type="NCBIfam" id="TIGR01749">
    <property type="entry name" value="fabA"/>
    <property type="match status" value="1"/>
</dbReference>
<dbReference type="NCBIfam" id="NF003509">
    <property type="entry name" value="PRK05174.1"/>
    <property type="match status" value="1"/>
</dbReference>
<dbReference type="PANTHER" id="PTHR30272">
    <property type="entry name" value="3-HYDROXYACYL-[ACYL-CARRIER-PROTEIN] DEHYDRATASE"/>
    <property type="match status" value="1"/>
</dbReference>
<dbReference type="PANTHER" id="PTHR30272:SF8">
    <property type="entry name" value="3-HYDROXYDECANOYL-[ACYL-CARRIER-PROTEIN] DEHYDRATASE"/>
    <property type="match status" value="1"/>
</dbReference>
<dbReference type="Pfam" id="PF07977">
    <property type="entry name" value="FabA"/>
    <property type="match status" value="1"/>
</dbReference>
<dbReference type="SUPFAM" id="SSF54637">
    <property type="entry name" value="Thioesterase/thiol ester dehydrase-isomerase"/>
    <property type="match status" value="1"/>
</dbReference>
<gene>
    <name evidence="1" type="primary">fabA</name>
    <name type="ordered locus">KPK_3586</name>
</gene>
<protein>
    <recommendedName>
        <fullName evidence="1">3-hydroxydecanoyl-[acyl-carrier-protein] dehydratase</fullName>
        <ecNumber evidence="1">4.2.1.59</ecNumber>
    </recommendedName>
    <alternativeName>
        <fullName evidence="1">3-hydroxyacyl-[acyl-carrier-protein] dehydratase FabA</fullName>
    </alternativeName>
    <alternativeName>
        <fullName evidence="1">Beta-hydroxydecanoyl thioester dehydrase</fullName>
    </alternativeName>
    <alternativeName>
        <fullName evidence="1">Trans-2-decenoyl-[acyl-carrier-protein] isomerase</fullName>
        <ecNumber evidence="1">5.3.3.14</ecNumber>
    </alternativeName>
</protein>